<evidence type="ECO:0000255" key="1">
    <source>
        <dbReference type="PROSITE-ProRule" id="PRU00108"/>
    </source>
</evidence>
<evidence type="ECO:0000305" key="2"/>
<evidence type="ECO:0007744" key="3">
    <source>
    </source>
</evidence>
<gene>
    <name type="primary">HOXB6</name>
    <name type="synonym">HOX2B</name>
</gene>
<reference key="1">
    <citation type="journal article" date="1991" name="Nucleic Acids Res.">
        <title>Alternative splicing of the HOX 2.2 homeobox gene in human hematopoietic cells and murine embryonic and adult tissues.</title>
        <authorList>
            <person name="Shen W.-F."/>
            <person name="Detmer K."/>
            <person name="Simonitch-Eason T.A."/>
            <person name="Lawrence H.J."/>
            <person name="Largman C."/>
        </authorList>
    </citation>
    <scope>NUCLEOTIDE SEQUENCE [GENOMIC DNA]</scope>
    <scope>ALTERNATIVE SPLICING</scope>
    <source>
        <tissue>Placenta</tissue>
    </source>
</reference>
<reference key="2">
    <citation type="submission" date="1999-04" db="EMBL/GenBank/DDBJ databases">
        <title>Expression of HOX genes in T lymphocytes and hairy leukemia cell lines.</title>
        <authorList>
            <person name="Frezza D."/>
            <person name="D'Esposito M."/>
            <person name="Migliaccio E."/>
            <person name="Santini S.M."/>
            <person name="Fruscalzo A."/>
        </authorList>
    </citation>
    <scope>NUCLEOTIDE SEQUENCE [MRNA] (ISOFORM 1)</scope>
</reference>
<reference key="3">
    <citation type="journal article" date="2000" name="Am. J. Hum. Genet.">
        <title>Overall linkage disequilibrium in 33 populations for highly informative multisite haplotypes spanning the HOXB gene cluster.</title>
        <authorList>
            <person name="Kidd K.K."/>
            <person name="Busygina V."/>
            <person name="DeMille M.M.C."/>
            <person name="Speed W.C."/>
            <person name="Ruggeri V."/>
            <person name="Kidd J.R."/>
            <person name="Pakstis A.J."/>
        </authorList>
    </citation>
    <scope>NUCLEOTIDE SEQUENCE [GENOMIC DNA]</scope>
</reference>
<reference key="4">
    <citation type="journal article" date="2004" name="Nat. Genet.">
        <title>Complete sequencing and characterization of 21,243 full-length human cDNAs.</title>
        <authorList>
            <person name="Ota T."/>
            <person name="Suzuki Y."/>
            <person name="Nishikawa T."/>
            <person name="Otsuki T."/>
            <person name="Sugiyama T."/>
            <person name="Irie R."/>
            <person name="Wakamatsu A."/>
            <person name="Hayashi K."/>
            <person name="Sato H."/>
            <person name="Nagai K."/>
            <person name="Kimura K."/>
            <person name="Makita H."/>
            <person name="Sekine M."/>
            <person name="Obayashi M."/>
            <person name="Nishi T."/>
            <person name="Shibahara T."/>
            <person name="Tanaka T."/>
            <person name="Ishii S."/>
            <person name="Yamamoto J."/>
            <person name="Saito K."/>
            <person name="Kawai Y."/>
            <person name="Isono Y."/>
            <person name="Nakamura Y."/>
            <person name="Nagahari K."/>
            <person name="Murakami K."/>
            <person name="Yasuda T."/>
            <person name="Iwayanagi T."/>
            <person name="Wagatsuma M."/>
            <person name="Shiratori A."/>
            <person name="Sudo H."/>
            <person name="Hosoiri T."/>
            <person name="Kaku Y."/>
            <person name="Kodaira H."/>
            <person name="Kondo H."/>
            <person name="Sugawara M."/>
            <person name="Takahashi M."/>
            <person name="Kanda K."/>
            <person name="Yokoi T."/>
            <person name="Furuya T."/>
            <person name="Kikkawa E."/>
            <person name="Omura Y."/>
            <person name="Abe K."/>
            <person name="Kamihara K."/>
            <person name="Katsuta N."/>
            <person name="Sato K."/>
            <person name="Tanikawa M."/>
            <person name="Yamazaki M."/>
            <person name="Ninomiya K."/>
            <person name="Ishibashi T."/>
            <person name="Yamashita H."/>
            <person name="Murakawa K."/>
            <person name="Fujimori K."/>
            <person name="Tanai H."/>
            <person name="Kimata M."/>
            <person name="Watanabe M."/>
            <person name="Hiraoka S."/>
            <person name="Chiba Y."/>
            <person name="Ishida S."/>
            <person name="Ono Y."/>
            <person name="Takiguchi S."/>
            <person name="Watanabe S."/>
            <person name="Yosida M."/>
            <person name="Hotuta T."/>
            <person name="Kusano J."/>
            <person name="Kanehori K."/>
            <person name="Takahashi-Fujii A."/>
            <person name="Hara H."/>
            <person name="Tanase T.-O."/>
            <person name="Nomura Y."/>
            <person name="Togiya S."/>
            <person name="Komai F."/>
            <person name="Hara R."/>
            <person name="Takeuchi K."/>
            <person name="Arita M."/>
            <person name="Imose N."/>
            <person name="Musashino K."/>
            <person name="Yuuki H."/>
            <person name="Oshima A."/>
            <person name="Sasaki N."/>
            <person name="Aotsuka S."/>
            <person name="Yoshikawa Y."/>
            <person name="Matsunawa H."/>
            <person name="Ichihara T."/>
            <person name="Shiohata N."/>
            <person name="Sano S."/>
            <person name="Moriya S."/>
            <person name="Momiyama H."/>
            <person name="Satoh N."/>
            <person name="Takami S."/>
            <person name="Terashima Y."/>
            <person name="Suzuki O."/>
            <person name="Nakagawa S."/>
            <person name="Senoh A."/>
            <person name="Mizoguchi H."/>
            <person name="Goto Y."/>
            <person name="Shimizu F."/>
            <person name="Wakebe H."/>
            <person name="Hishigaki H."/>
            <person name="Watanabe T."/>
            <person name="Sugiyama A."/>
            <person name="Takemoto M."/>
            <person name="Kawakami B."/>
            <person name="Yamazaki M."/>
            <person name="Watanabe K."/>
            <person name="Kumagai A."/>
            <person name="Itakura S."/>
            <person name="Fukuzumi Y."/>
            <person name="Fujimori Y."/>
            <person name="Komiyama M."/>
            <person name="Tashiro H."/>
            <person name="Tanigami A."/>
            <person name="Fujiwara T."/>
            <person name="Ono T."/>
            <person name="Yamada K."/>
            <person name="Fujii Y."/>
            <person name="Ozaki K."/>
            <person name="Hirao M."/>
            <person name="Ohmori Y."/>
            <person name="Kawabata A."/>
            <person name="Hikiji T."/>
            <person name="Kobatake N."/>
            <person name="Inagaki H."/>
            <person name="Ikema Y."/>
            <person name="Okamoto S."/>
            <person name="Okitani R."/>
            <person name="Kawakami T."/>
            <person name="Noguchi S."/>
            <person name="Itoh T."/>
            <person name="Shigeta K."/>
            <person name="Senba T."/>
            <person name="Matsumura K."/>
            <person name="Nakajima Y."/>
            <person name="Mizuno T."/>
            <person name="Morinaga M."/>
            <person name="Sasaki M."/>
            <person name="Togashi T."/>
            <person name="Oyama M."/>
            <person name="Hata H."/>
            <person name="Watanabe M."/>
            <person name="Komatsu T."/>
            <person name="Mizushima-Sugano J."/>
            <person name="Satoh T."/>
            <person name="Shirai Y."/>
            <person name="Takahashi Y."/>
            <person name="Nakagawa K."/>
            <person name="Okumura K."/>
            <person name="Nagase T."/>
            <person name="Nomura N."/>
            <person name="Kikuchi H."/>
            <person name="Masuho Y."/>
            <person name="Yamashita R."/>
            <person name="Nakai K."/>
            <person name="Yada T."/>
            <person name="Nakamura Y."/>
            <person name="Ohara O."/>
            <person name="Isogai T."/>
            <person name="Sugano S."/>
        </authorList>
    </citation>
    <scope>NUCLEOTIDE SEQUENCE [LARGE SCALE MRNA] (ISOFORM 1)</scope>
    <source>
        <tissue>Colon</tissue>
    </source>
</reference>
<reference key="5">
    <citation type="submission" date="2005-09" db="EMBL/GenBank/DDBJ databases">
        <authorList>
            <person name="Mural R.J."/>
            <person name="Istrail S."/>
            <person name="Sutton G.G."/>
            <person name="Florea L."/>
            <person name="Halpern A.L."/>
            <person name="Mobarry C.M."/>
            <person name="Lippert R."/>
            <person name="Walenz B."/>
            <person name="Shatkay H."/>
            <person name="Dew I."/>
            <person name="Miller J.R."/>
            <person name="Flanigan M.J."/>
            <person name="Edwards N.J."/>
            <person name="Bolanos R."/>
            <person name="Fasulo D."/>
            <person name="Halldorsson B.V."/>
            <person name="Hannenhalli S."/>
            <person name="Turner R."/>
            <person name="Yooseph S."/>
            <person name="Lu F."/>
            <person name="Nusskern D.R."/>
            <person name="Shue B.C."/>
            <person name="Zheng X.H."/>
            <person name="Zhong F."/>
            <person name="Delcher A.L."/>
            <person name="Huson D.H."/>
            <person name="Kravitz S.A."/>
            <person name="Mouchard L."/>
            <person name="Reinert K."/>
            <person name="Remington K.A."/>
            <person name="Clark A.G."/>
            <person name="Waterman M.S."/>
            <person name="Eichler E.E."/>
            <person name="Adams M.D."/>
            <person name="Hunkapiller M.W."/>
            <person name="Myers E.W."/>
            <person name="Venter J.C."/>
        </authorList>
    </citation>
    <scope>NUCLEOTIDE SEQUENCE [LARGE SCALE GENOMIC DNA]</scope>
</reference>
<reference key="6">
    <citation type="journal article" date="2004" name="Genome Res.">
        <title>The status, quality, and expansion of the NIH full-length cDNA project: the Mammalian Gene Collection (MGC).</title>
        <authorList>
            <consortium name="The MGC Project Team"/>
        </authorList>
    </citation>
    <scope>NUCLEOTIDE SEQUENCE [LARGE SCALE MRNA] (ISOFORM 1)</scope>
    <source>
        <tissue>Lung</tissue>
    </source>
</reference>
<reference key="7">
    <citation type="journal article" date="1989" name="Proc. Natl. Acad. Sci. U.S.A.">
        <title>Lineage-restricted expression of homeobox-containing genes in human hematopoietic cell lines.</title>
        <authorList>
            <person name="Shen W.-F."/>
            <person name="Largman C."/>
            <person name="Lowney P."/>
            <person name="Corral J.C."/>
            <person name="Detmer K."/>
            <person name="Hauser C.A."/>
            <person name="Simonitch T.A."/>
            <person name="Hack F.M."/>
            <person name="Lawrence H.J."/>
        </authorList>
    </citation>
    <scope>NUCLEOTIDE SEQUENCE [MRNA] OF 135-224</scope>
</reference>
<reference key="8">
    <citation type="journal article" date="1984" name="Cell">
        <title>Human DNA sequences homologous to a protein coding region conserved between homeotic genes of Drosophila.</title>
        <authorList>
            <person name="Levine M."/>
            <person name="Rubin G.M."/>
            <person name="Tjian R."/>
        </authorList>
    </citation>
    <scope>PRELIMINARY NUCLEOTIDE SEQUENCE OF 136-224</scope>
</reference>
<reference key="9">
    <citation type="journal article" date="2007" name="Science">
        <title>ATM and ATR substrate analysis reveals extensive protein networks responsive to DNA damage.</title>
        <authorList>
            <person name="Matsuoka S."/>
            <person name="Ballif B.A."/>
            <person name="Smogorzewska A."/>
            <person name="McDonald E.R. III"/>
            <person name="Hurov K.E."/>
            <person name="Luo J."/>
            <person name="Bakalarski C.E."/>
            <person name="Zhao Z."/>
            <person name="Solimini N."/>
            <person name="Lerenthal Y."/>
            <person name="Shiloh Y."/>
            <person name="Gygi S.P."/>
            <person name="Elledge S.J."/>
        </authorList>
    </citation>
    <scope>PHOSPHORYLATION [LARGE SCALE ANALYSIS] AT SER-214</scope>
    <scope>IDENTIFICATION BY MASS SPECTROMETRY [LARGE SCALE ANALYSIS]</scope>
    <source>
        <tissue>Embryonic kidney</tissue>
    </source>
</reference>
<reference key="10">
    <citation type="journal article" date="2009" name="Anal. Chem.">
        <title>Lys-N and trypsin cover complementary parts of the phosphoproteome in a refined SCX-based approach.</title>
        <authorList>
            <person name="Gauci S."/>
            <person name="Helbig A.O."/>
            <person name="Slijper M."/>
            <person name="Krijgsveld J."/>
            <person name="Heck A.J."/>
            <person name="Mohammed S."/>
        </authorList>
    </citation>
    <scope>IDENTIFICATION BY MASS SPECTROMETRY [LARGE SCALE ANALYSIS]</scope>
</reference>
<protein>
    <recommendedName>
        <fullName>Homeobox protein Hox-B6</fullName>
    </recommendedName>
    <alternativeName>
        <fullName>Homeobox protein Hox-2.2</fullName>
    </alternativeName>
    <alternativeName>
        <fullName>Homeobox protein Hox-2B</fullName>
    </alternativeName>
    <alternativeName>
        <fullName>Homeobox protein Hu-2</fullName>
    </alternativeName>
</protein>
<organism>
    <name type="scientific">Homo sapiens</name>
    <name type="common">Human</name>
    <dbReference type="NCBI Taxonomy" id="9606"/>
    <lineage>
        <taxon>Eukaryota</taxon>
        <taxon>Metazoa</taxon>
        <taxon>Chordata</taxon>
        <taxon>Craniata</taxon>
        <taxon>Vertebrata</taxon>
        <taxon>Euteleostomi</taxon>
        <taxon>Mammalia</taxon>
        <taxon>Eutheria</taxon>
        <taxon>Euarchontoglires</taxon>
        <taxon>Primates</taxon>
        <taxon>Haplorrhini</taxon>
        <taxon>Catarrhini</taxon>
        <taxon>Hominidae</taxon>
        <taxon>Homo</taxon>
    </lineage>
</organism>
<proteinExistence type="evidence at protein level"/>
<keyword id="KW-0025">Alternative splicing</keyword>
<keyword id="KW-0217">Developmental protein</keyword>
<keyword id="KW-0238">DNA-binding</keyword>
<keyword id="KW-0371">Homeobox</keyword>
<keyword id="KW-0539">Nucleus</keyword>
<keyword id="KW-0597">Phosphoprotein</keyword>
<keyword id="KW-1267">Proteomics identification</keyword>
<keyword id="KW-1185">Reference proteome</keyword>
<keyword id="KW-0804">Transcription</keyword>
<keyword id="KW-0805">Transcription regulation</keyword>
<accession>P17509</accession>
<accession>A8K835</accession>
<accession>D3DTV5</accession>
<accession>P09068</accession>
<accession>Q9HB11</accession>
<accession>Q9UGH2</accession>
<name>HXB6_HUMAN</name>
<dbReference type="EMBL" id="X58431">
    <property type="protein sequence ID" value="CAA41335.1"/>
    <property type="molecule type" value="Genomic_DNA"/>
</dbReference>
<dbReference type="EMBL" id="X58431">
    <property type="protein sequence ID" value="CAA41336.1"/>
    <property type="molecule type" value="Genomic_DNA"/>
</dbReference>
<dbReference type="EMBL" id="AJ270993">
    <property type="protein sequence ID" value="CAB65909.1"/>
    <property type="molecule type" value="mRNA"/>
</dbReference>
<dbReference type="EMBL" id="AF287967">
    <property type="protein sequence ID" value="AAG31552.1"/>
    <property type="molecule type" value="Genomic_DNA"/>
</dbReference>
<dbReference type="EMBL" id="AK292200">
    <property type="protein sequence ID" value="BAF84889.1"/>
    <property type="molecule type" value="mRNA"/>
</dbReference>
<dbReference type="EMBL" id="CH471109">
    <property type="protein sequence ID" value="EAW94728.1"/>
    <property type="molecule type" value="Genomic_DNA"/>
</dbReference>
<dbReference type="EMBL" id="CH471109">
    <property type="protein sequence ID" value="EAW94729.1"/>
    <property type="molecule type" value="Genomic_DNA"/>
</dbReference>
<dbReference type="EMBL" id="CH471109">
    <property type="protein sequence ID" value="EAW94730.1"/>
    <property type="molecule type" value="Genomic_DNA"/>
</dbReference>
<dbReference type="EMBL" id="CH471109">
    <property type="protein sequence ID" value="EAW94731.1"/>
    <property type="molecule type" value="Genomic_DNA"/>
</dbReference>
<dbReference type="EMBL" id="BC014651">
    <property type="protein sequence ID" value="AAH14651.1"/>
    <property type="molecule type" value="mRNA"/>
</dbReference>
<dbReference type="EMBL" id="M30597">
    <property type="protein sequence ID" value="AAA36004.1"/>
    <property type="molecule type" value="mRNA"/>
</dbReference>
<dbReference type="EMBL" id="K02571">
    <property type="status" value="NOT_ANNOTATED_CDS"/>
    <property type="molecule type" value="Genomic_DNA"/>
</dbReference>
<dbReference type="CCDS" id="CCDS11531.1">
    <molecule id="P17509-1"/>
</dbReference>
<dbReference type="PIR" id="A05266">
    <property type="entry name" value="A05266"/>
</dbReference>
<dbReference type="PIR" id="S26400">
    <property type="entry name" value="S26400"/>
</dbReference>
<dbReference type="RefSeq" id="NP_001356326.1">
    <molecule id="P17509-1"/>
    <property type="nucleotide sequence ID" value="NM_001369397.2"/>
</dbReference>
<dbReference type="RefSeq" id="NP_061825.2">
    <molecule id="P17509-1"/>
    <property type="nucleotide sequence ID" value="NM_018952.4"/>
</dbReference>
<dbReference type="RefSeq" id="XP_005257340.1">
    <property type="nucleotide sequence ID" value="XM_005257283.3"/>
</dbReference>
<dbReference type="RefSeq" id="XP_005257341.1">
    <property type="nucleotide sequence ID" value="XM_005257284.3"/>
</dbReference>
<dbReference type="RefSeq" id="XP_047291864.1">
    <molecule id="P17509-1"/>
    <property type="nucleotide sequence ID" value="XM_047435908.1"/>
</dbReference>
<dbReference type="RefSeq" id="XP_054171902.1">
    <molecule id="P17509-1"/>
    <property type="nucleotide sequence ID" value="XM_054315927.1"/>
</dbReference>
<dbReference type="SMR" id="P17509"/>
<dbReference type="BioGRID" id="109456">
    <property type="interactions" value="55"/>
</dbReference>
<dbReference type="ELM" id="P17509"/>
<dbReference type="FunCoup" id="P17509">
    <property type="interactions" value="1120"/>
</dbReference>
<dbReference type="IntAct" id="P17509">
    <property type="interactions" value="48"/>
</dbReference>
<dbReference type="MINT" id="P17509"/>
<dbReference type="STRING" id="9606.ENSP00000420009"/>
<dbReference type="GlyGen" id="P17509">
    <property type="glycosylation" value="1 site, 1 O-linked glycan (1 site)"/>
</dbReference>
<dbReference type="iPTMnet" id="P17509"/>
<dbReference type="PhosphoSitePlus" id="P17509"/>
<dbReference type="BioMuta" id="HOXB6"/>
<dbReference type="DMDM" id="116242515"/>
<dbReference type="jPOST" id="P17509"/>
<dbReference type="MassIVE" id="P17509"/>
<dbReference type="PaxDb" id="9606-ENSP00000420009"/>
<dbReference type="PeptideAtlas" id="P17509"/>
<dbReference type="ProteomicsDB" id="53478">
    <molecule id="P17509-1"/>
</dbReference>
<dbReference type="ProteomicsDB" id="53479">
    <molecule id="P17509-2"/>
</dbReference>
<dbReference type="Pumba" id="P17509"/>
<dbReference type="Antibodypedia" id="17852">
    <property type="antibodies" value="159 antibodies from 22 providers"/>
</dbReference>
<dbReference type="DNASU" id="3216"/>
<dbReference type="Ensembl" id="ENST00000225648.4">
    <molecule id="P17509-1"/>
    <property type="protein sequence ID" value="ENSP00000225648.3"/>
    <property type="gene ID" value="ENSG00000108511.10"/>
</dbReference>
<dbReference type="Ensembl" id="ENST00000484302.3">
    <molecule id="P17509-1"/>
    <property type="protein sequence ID" value="ENSP00000420009.2"/>
    <property type="gene ID" value="ENSG00000108511.10"/>
</dbReference>
<dbReference type="GeneID" id="3216"/>
<dbReference type="KEGG" id="hsa:3216"/>
<dbReference type="MANE-Select" id="ENST00000225648.4">
    <property type="protein sequence ID" value="ENSP00000225648.3"/>
    <property type="RefSeq nucleotide sequence ID" value="NM_018952.5"/>
    <property type="RefSeq protein sequence ID" value="NP_061825.2"/>
</dbReference>
<dbReference type="UCSC" id="uc002ins.2">
    <molecule id="P17509-1"/>
    <property type="organism name" value="human"/>
</dbReference>
<dbReference type="AGR" id="HGNC:5117"/>
<dbReference type="CTD" id="3216"/>
<dbReference type="DisGeNET" id="3216"/>
<dbReference type="GeneCards" id="HOXB6"/>
<dbReference type="HGNC" id="HGNC:5117">
    <property type="gene designation" value="HOXB6"/>
</dbReference>
<dbReference type="HPA" id="ENSG00000108511">
    <property type="expression patterns" value="Tissue enhanced (epididymis, kidney)"/>
</dbReference>
<dbReference type="MIM" id="142961">
    <property type="type" value="gene"/>
</dbReference>
<dbReference type="neXtProt" id="NX_P17509"/>
<dbReference type="OpenTargets" id="ENSG00000108511"/>
<dbReference type="PharmGKB" id="PA29393"/>
<dbReference type="VEuPathDB" id="HostDB:ENSG00000108511"/>
<dbReference type="eggNOG" id="KOG0489">
    <property type="taxonomic scope" value="Eukaryota"/>
</dbReference>
<dbReference type="GeneTree" id="ENSGT00940000161108"/>
<dbReference type="HOGENOM" id="CLU_061398_1_1_1"/>
<dbReference type="InParanoid" id="P17509"/>
<dbReference type="OMA" id="CAQDKNV"/>
<dbReference type="OrthoDB" id="6159439at2759"/>
<dbReference type="PAN-GO" id="P17509">
    <property type="GO annotations" value="5 GO annotations based on evolutionary models"/>
</dbReference>
<dbReference type="PhylomeDB" id="P17509"/>
<dbReference type="TreeFam" id="TF316310"/>
<dbReference type="PathwayCommons" id="P17509"/>
<dbReference type="SignaLink" id="P17509"/>
<dbReference type="SIGNOR" id="P17509"/>
<dbReference type="BioGRID-ORCS" id="3216">
    <property type="hits" value="27 hits in 1184 CRISPR screens"/>
</dbReference>
<dbReference type="ChiTaRS" id="HOXB6">
    <property type="organism name" value="human"/>
</dbReference>
<dbReference type="GeneWiki" id="HOXB6"/>
<dbReference type="GenomeRNAi" id="3216"/>
<dbReference type="Pharos" id="P17509">
    <property type="development level" value="Tbio"/>
</dbReference>
<dbReference type="PRO" id="PR:P17509"/>
<dbReference type="Proteomes" id="UP000005640">
    <property type="component" value="Chromosome 17"/>
</dbReference>
<dbReference type="RNAct" id="P17509">
    <property type="molecule type" value="protein"/>
</dbReference>
<dbReference type="Bgee" id="ENSG00000108511">
    <property type="expression patterns" value="Expressed in corpus epididymis and 119 other cell types or tissues"/>
</dbReference>
<dbReference type="GO" id="GO:0000785">
    <property type="term" value="C:chromatin"/>
    <property type="evidence" value="ECO:0000247"/>
    <property type="project" value="NTNU_SB"/>
</dbReference>
<dbReference type="GO" id="GO:0005634">
    <property type="term" value="C:nucleus"/>
    <property type="evidence" value="ECO:0000318"/>
    <property type="project" value="GO_Central"/>
</dbReference>
<dbReference type="GO" id="GO:0000981">
    <property type="term" value="F:DNA-binding transcription factor activity, RNA polymerase II-specific"/>
    <property type="evidence" value="ECO:0000247"/>
    <property type="project" value="NTNU_SB"/>
</dbReference>
<dbReference type="GO" id="GO:0003723">
    <property type="term" value="F:RNA binding"/>
    <property type="evidence" value="ECO:0007005"/>
    <property type="project" value="UniProtKB"/>
</dbReference>
<dbReference type="GO" id="GO:0000978">
    <property type="term" value="F:RNA polymerase II cis-regulatory region sequence-specific DNA binding"/>
    <property type="evidence" value="ECO:0000318"/>
    <property type="project" value="GO_Central"/>
</dbReference>
<dbReference type="GO" id="GO:1990837">
    <property type="term" value="F:sequence-specific double-stranded DNA binding"/>
    <property type="evidence" value="ECO:0000314"/>
    <property type="project" value="ARUK-UCL"/>
</dbReference>
<dbReference type="GO" id="GO:0009952">
    <property type="term" value="P:anterior/posterior pattern specification"/>
    <property type="evidence" value="ECO:0000318"/>
    <property type="project" value="GO_Central"/>
</dbReference>
<dbReference type="GO" id="GO:0048704">
    <property type="term" value="P:embryonic skeletal system morphogenesis"/>
    <property type="evidence" value="ECO:0007669"/>
    <property type="project" value="Ensembl"/>
</dbReference>
<dbReference type="GO" id="GO:0034101">
    <property type="term" value="P:erythrocyte homeostasis"/>
    <property type="evidence" value="ECO:0007669"/>
    <property type="project" value="Ensembl"/>
</dbReference>
<dbReference type="GO" id="GO:0006357">
    <property type="term" value="P:regulation of transcription by RNA polymerase II"/>
    <property type="evidence" value="ECO:0000318"/>
    <property type="project" value="GO_Central"/>
</dbReference>
<dbReference type="CDD" id="cd00086">
    <property type="entry name" value="homeodomain"/>
    <property type="match status" value="1"/>
</dbReference>
<dbReference type="FunFam" id="1.10.10.60:FF:000017">
    <property type="entry name" value="Homeobox protein antennapedia"/>
    <property type="match status" value="1"/>
</dbReference>
<dbReference type="Gene3D" id="1.10.10.60">
    <property type="entry name" value="Homeodomain-like"/>
    <property type="match status" value="1"/>
</dbReference>
<dbReference type="InterPro" id="IPR050296">
    <property type="entry name" value="Antp_homeobox"/>
</dbReference>
<dbReference type="InterPro" id="IPR001356">
    <property type="entry name" value="HD"/>
</dbReference>
<dbReference type="InterPro" id="IPR020479">
    <property type="entry name" value="HD_metazoa"/>
</dbReference>
<dbReference type="InterPro" id="IPR017995">
    <property type="entry name" value="Homeobox_antennapedia"/>
</dbReference>
<dbReference type="InterPro" id="IPR001827">
    <property type="entry name" value="Homeobox_Antennapedia_CS"/>
</dbReference>
<dbReference type="InterPro" id="IPR017970">
    <property type="entry name" value="Homeobox_CS"/>
</dbReference>
<dbReference type="InterPro" id="IPR009057">
    <property type="entry name" value="Homeodomain-like_sf"/>
</dbReference>
<dbReference type="PANTHER" id="PTHR45659">
    <property type="entry name" value="HOMEOBOX PROTEIN HOX"/>
    <property type="match status" value="1"/>
</dbReference>
<dbReference type="PANTHER" id="PTHR45659:SF9">
    <property type="entry name" value="HOMEOBOX PROTEIN HOX-B6"/>
    <property type="match status" value="1"/>
</dbReference>
<dbReference type="Pfam" id="PF00046">
    <property type="entry name" value="Homeodomain"/>
    <property type="match status" value="1"/>
</dbReference>
<dbReference type="PRINTS" id="PR00025">
    <property type="entry name" value="ANTENNAPEDIA"/>
</dbReference>
<dbReference type="PRINTS" id="PR00024">
    <property type="entry name" value="HOMEOBOX"/>
</dbReference>
<dbReference type="SMART" id="SM00389">
    <property type="entry name" value="HOX"/>
    <property type="match status" value="1"/>
</dbReference>
<dbReference type="SUPFAM" id="SSF46689">
    <property type="entry name" value="Homeodomain-like"/>
    <property type="match status" value="1"/>
</dbReference>
<dbReference type="PROSITE" id="PS00032">
    <property type="entry name" value="ANTENNAPEDIA"/>
    <property type="match status" value="1"/>
</dbReference>
<dbReference type="PROSITE" id="PS00027">
    <property type="entry name" value="HOMEOBOX_1"/>
    <property type="match status" value="1"/>
</dbReference>
<dbReference type="PROSITE" id="PS50071">
    <property type="entry name" value="HOMEOBOX_2"/>
    <property type="match status" value="1"/>
</dbReference>
<feature type="chain" id="PRO_0000200135" description="Homeobox protein Hox-B6">
    <location>
        <begin position="1"/>
        <end position="224"/>
    </location>
</feature>
<feature type="DNA-binding region" description="Homeobox" evidence="1">
    <location>
        <begin position="146"/>
        <end position="205"/>
    </location>
</feature>
<feature type="short sequence motif" description="Antp-type hexapeptide">
    <location>
        <begin position="127"/>
        <end position="132"/>
    </location>
</feature>
<feature type="modified residue" description="Phosphoserine" evidence="3">
    <location>
        <position position="214"/>
    </location>
</feature>
<feature type="splice variant" id="VSP_002388" description="In isoform 2." evidence="2">
    <original>S</original>
    <variation>E</variation>
    <location>
        <position position="140"/>
    </location>
</feature>
<feature type="splice variant" id="VSP_002389" description="In isoform 2." evidence="2">
    <location>
        <begin position="141"/>
        <end position="224"/>
    </location>
</feature>
<feature type="sequence conflict" description="In Ref. 1; CAA41335 and 2; CAB65909." evidence="2" ref="1 2">
    <original>QL</original>
    <variation>HV</variation>
    <location>
        <begin position="24"/>
        <end position="25"/>
    </location>
</feature>
<feature type="sequence conflict" description="In Ref. 1; CAA41335." evidence="2" ref="1">
    <original>A</original>
    <variation>R</variation>
    <location>
        <position position="33"/>
    </location>
</feature>
<feature type="sequence conflict" description="In Ref. 1; CAA41335." evidence="2" ref="1">
    <original>P</original>
    <variation>R</variation>
    <location>
        <position position="60"/>
    </location>
</feature>
<feature type="sequence conflict" description="In Ref. 1; CAA41335." evidence="2" ref="1">
    <original>D</original>
    <variation>A</variation>
    <location>
        <position position="73"/>
    </location>
</feature>
<feature type="sequence conflict" description="In Ref. 7; AAA36004." evidence="2" ref="7">
    <original>GR</original>
    <variation>A</variation>
    <location>
        <begin position="149"/>
        <end position="150"/>
    </location>
</feature>
<sequence>MSSYFVNSTFPVTLASGQESFLGQLPLYSSGYADPLRHYPAPYGPGPGQDKGFATSSYYPPAGGGYGRAAPCDYGPAPAFYREKESACALSGADEQPPFHPEPRKSDCAQDKSVFGETEEQKCSTPVYPWMQRMNSCNSSSFGPSGRRGRQTYTRYQTLELEKEFHYNRYLTRRRRIEIAHALCLTERQIKIWFQNRRMKWKKESKLLSASQLSAEEEEEKQAE</sequence>
<comment type="function">
    <text>Sequence-specific transcription factor which is part of a developmental regulatory system that provides cells with specific positional identities on the anterior-posterior axis.</text>
</comment>
<comment type="interaction">
    <interactant intactId="EBI-741308">
        <id>P17509</id>
    </interactant>
    <interactant intactId="EBI-745579">
        <id>P49761</id>
        <label>CLK3</label>
    </interactant>
    <organismsDiffer>false</organismsDiffer>
    <experiments>6</experiments>
</comment>
<comment type="interaction">
    <interactant intactId="EBI-741308">
        <id>P17509</id>
    </interactant>
    <interactant intactId="EBI-740553">
        <id>P13807</id>
        <label>GYS1</label>
    </interactant>
    <organismsDiffer>false</organismsDiffer>
    <experiments>3</experiments>
</comment>
<comment type="interaction">
    <interactant intactId="EBI-741308">
        <id>P17509</id>
    </interactant>
    <interactant intactId="EBI-11750983">
        <id>Q9HC98-4</id>
        <label>NEK6</label>
    </interactant>
    <organismsDiffer>false</organismsDiffer>
    <experiments>3</experiments>
</comment>
<comment type="interaction">
    <interactant intactId="EBI-741308">
        <id>P17509</id>
    </interactant>
    <interactant intactId="EBI-741158">
        <id>Q96HA8</id>
        <label>NTAQ1</label>
    </interactant>
    <organismsDiffer>false</organismsDiffer>
    <experiments>3</experiments>
</comment>
<comment type="interaction">
    <interactant intactId="EBI-741308">
        <id>P17509</id>
    </interactant>
    <interactant intactId="EBI-593303">
        <id>P78362</id>
        <label>SRPK2</label>
    </interactant>
    <organismsDiffer>false</organismsDiffer>
    <experiments>3</experiments>
</comment>
<comment type="interaction">
    <interactant intactId="EBI-741308">
        <id>P17509</id>
    </interactant>
    <interactant intactId="EBI-10239812">
        <id>Q96M29</id>
        <label>TEKT5</label>
    </interactant>
    <organismsDiffer>false</organismsDiffer>
    <experiments>3</experiments>
</comment>
<comment type="subcellular location">
    <subcellularLocation>
        <location>Nucleus</location>
    </subcellularLocation>
</comment>
<comment type="alternative products">
    <event type="alternative splicing"/>
    <isoform>
        <id>P17509-1</id>
        <name>1</name>
        <sequence type="displayed"/>
    </isoform>
    <isoform>
        <id>P17509-2</id>
        <name>2</name>
        <name>Homeobox-less</name>
        <sequence type="described" ref="VSP_002388 VSP_002389"/>
    </isoform>
</comment>
<comment type="similarity">
    <text evidence="2">Belongs to the Antp homeobox family.</text>
</comment>